<protein>
    <recommendedName>
        <fullName>Beta-2-microglobulin</fullName>
    </recommendedName>
</protein>
<comment type="function">
    <text evidence="1">Component of the class I major histocompatibility complex (MHC). Involved in the presentation of peptide antigens to the immune system (By similarity).</text>
</comment>
<comment type="subunit">
    <text evidence="1">Heterodimer of an alpha chain and a beta chain. Beta-2-microglobulin is the beta-chain of major histocompatibility complex class I molecules (By similarity).</text>
</comment>
<comment type="subcellular location">
    <subcellularLocation>
        <location evidence="1">Secreted</location>
    </subcellularLocation>
</comment>
<comment type="similarity">
    <text evidence="3">Belongs to the beta-2-microglobulin family.</text>
</comment>
<dbReference type="EMBL" id="AF032031">
    <property type="protein sequence ID" value="AAC39796.1"/>
    <property type="molecule type" value="Genomic_DNA"/>
</dbReference>
<dbReference type="EMBL" id="AF032029">
    <property type="protein sequence ID" value="AAC39796.1"/>
    <property type="status" value="JOINED"/>
    <property type="molecule type" value="Genomic_DNA"/>
</dbReference>
<dbReference type="EMBL" id="AF032030">
    <property type="protein sequence ID" value="AAC39796.1"/>
    <property type="status" value="JOINED"/>
    <property type="molecule type" value="Genomic_DNA"/>
</dbReference>
<dbReference type="EMBL" id="S71244">
    <property type="protein sequence ID" value="AAB31321.1"/>
    <property type="molecule type" value="mRNA"/>
</dbReference>
<dbReference type="PIR" id="I54312">
    <property type="entry name" value="I54312"/>
</dbReference>
<dbReference type="SMR" id="P55079"/>
<dbReference type="GO" id="GO:0005576">
    <property type="term" value="C:extracellular region"/>
    <property type="evidence" value="ECO:0007669"/>
    <property type="project" value="UniProtKB-SubCell"/>
</dbReference>
<dbReference type="GO" id="GO:0042612">
    <property type="term" value="C:MHC class I protein complex"/>
    <property type="evidence" value="ECO:0007669"/>
    <property type="project" value="UniProtKB-KW"/>
</dbReference>
<dbReference type="GO" id="GO:0002474">
    <property type="term" value="P:antigen processing and presentation of peptide antigen via MHC class I"/>
    <property type="evidence" value="ECO:0007669"/>
    <property type="project" value="UniProtKB-KW"/>
</dbReference>
<dbReference type="GO" id="GO:0006955">
    <property type="term" value="P:immune response"/>
    <property type="evidence" value="ECO:0007669"/>
    <property type="project" value="InterPro"/>
</dbReference>
<dbReference type="CDD" id="cd05770">
    <property type="entry name" value="IgC1_beta2m"/>
    <property type="match status" value="1"/>
</dbReference>
<dbReference type="FunFam" id="2.60.40.10:FF:001005">
    <property type="entry name" value="Beta-2-microglobulin"/>
    <property type="match status" value="1"/>
</dbReference>
<dbReference type="Gene3D" id="2.60.40.10">
    <property type="entry name" value="Immunoglobulins"/>
    <property type="match status" value="1"/>
</dbReference>
<dbReference type="InterPro" id="IPR015707">
    <property type="entry name" value="B2Microglobulin"/>
</dbReference>
<dbReference type="InterPro" id="IPR007110">
    <property type="entry name" value="Ig-like_dom"/>
</dbReference>
<dbReference type="InterPro" id="IPR036179">
    <property type="entry name" value="Ig-like_dom_sf"/>
</dbReference>
<dbReference type="InterPro" id="IPR013783">
    <property type="entry name" value="Ig-like_fold"/>
</dbReference>
<dbReference type="InterPro" id="IPR003006">
    <property type="entry name" value="Ig/MHC_CS"/>
</dbReference>
<dbReference type="InterPro" id="IPR003597">
    <property type="entry name" value="Ig_C1-set"/>
</dbReference>
<dbReference type="InterPro" id="IPR050160">
    <property type="entry name" value="MHC/Immunoglobulin"/>
</dbReference>
<dbReference type="PANTHER" id="PTHR19944:SF62">
    <property type="entry name" value="BETA-2-MICROGLOBULIN"/>
    <property type="match status" value="1"/>
</dbReference>
<dbReference type="PANTHER" id="PTHR19944">
    <property type="entry name" value="MHC CLASS II-RELATED"/>
    <property type="match status" value="1"/>
</dbReference>
<dbReference type="Pfam" id="PF07654">
    <property type="entry name" value="C1-set"/>
    <property type="match status" value="1"/>
</dbReference>
<dbReference type="SMART" id="SM00407">
    <property type="entry name" value="IGc1"/>
    <property type="match status" value="1"/>
</dbReference>
<dbReference type="SUPFAM" id="SSF48726">
    <property type="entry name" value="Immunoglobulin"/>
    <property type="match status" value="1"/>
</dbReference>
<dbReference type="PROSITE" id="PS50835">
    <property type="entry name" value="IG_LIKE"/>
    <property type="match status" value="1"/>
</dbReference>
<dbReference type="PROSITE" id="PS00290">
    <property type="entry name" value="IG_MHC"/>
    <property type="match status" value="1"/>
</dbReference>
<evidence type="ECO:0000250" key="1"/>
<evidence type="ECO:0000255" key="2">
    <source>
        <dbReference type="PROSITE-ProRule" id="PRU00114"/>
    </source>
</evidence>
<evidence type="ECO:0000305" key="3"/>
<feature type="signal peptide" evidence="1">
    <location>
        <begin position="1"/>
        <end position="20"/>
    </location>
</feature>
<feature type="chain" id="PRO_0000018798" description="Beta-2-microglobulin">
    <location>
        <begin position="21"/>
        <end position="119"/>
    </location>
</feature>
<feature type="domain" description="Ig-like C1-type">
    <location>
        <begin position="25"/>
        <end position="114"/>
    </location>
</feature>
<feature type="disulfide bond" evidence="2">
    <location>
        <begin position="45"/>
        <end position="100"/>
    </location>
</feature>
<name>B2MG_SAGOE</name>
<keyword id="KW-1015">Disulfide bond</keyword>
<keyword id="KW-0391">Immunity</keyword>
<keyword id="KW-0393">Immunoglobulin domain</keyword>
<keyword id="KW-0490">MHC I</keyword>
<keyword id="KW-0964">Secreted</keyword>
<keyword id="KW-0732">Signal</keyword>
<reference key="1">
    <citation type="journal article" date="1998" name="Immunogenetics">
        <title>Beta-2-microglobulin in neotropical primates (Platyrrhini).</title>
        <authorList>
            <person name="Canavez F.C."/>
            <person name="Ladasky J.J."/>
            <person name="Muniz J.A.P.C."/>
            <person name="Seuanez H.N."/>
            <person name="Parham P."/>
        </authorList>
    </citation>
    <scope>NUCLEOTIDE SEQUENCE [GENOMIC DNA]</scope>
    <source>
        <tissue>Blood</tissue>
    </source>
</reference>
<reference key="2">
    <citation type="journal article" date="1994" name="Hum. Immunol.">
        <title>Baboon and cotton-top tamarin B2m cDNA sequences and the evolution of primate beta 2-microglobulin.</title>
        <authorList>
            <person name="Ruiz R.E."/>
            <person name="Hall B.L."/>
            <person name="Doyle C."/>
            <person name="Ward F.E."/>
        </authorList>
    </citation>
    <scope>NUCLEOTIDE SEQUENCE [MRNA] OF 21-119</scope>
</reference>
<proteinExistence type="inferred from homology"/>
<sequence length="119" mass="13837">MARFVVVPLLVLVSLFGLEAIQHPPKIQVYSRYPADNGKPNFLNCYVSGFHPSDIEVDLLKNGKKIEKVEHSDLSFSKDWSFYLLYYTEFTPNEKDEYACRVSHVTFSTPKTVKWDRNM</sequence>
<organism>
    <name type="scientific">Saguinus oedipus</name>
    <name type="common">Cotton-top tamarin</name>
    <dbReference type="NCBI Taxonomy" id="9490"/>
    <lineage>
        <taxon>Eukaryota</taxon>
        <taxon>Metazoa</taxon>
        <taxon>Chordata</taxon>
        <taxon>Craniata</taxon>
        <taxon>Vertebrata</taxon>
        <taxon>Euteleostomi</taxon>
        <taxon>Mammalia</taxon>
        <taxon>Eutheria</taxon>
        <taxon>Euarchontoglires</taxon>
        <taxon>Primates</taxon>
        <taxon>Haplorrhini</taxon>
        <taxon>Platyrrhini</taxon>
        <taxon>Cebidae</taxon>
        <taxon>Callitrichinae</taxon>
        <taxon>Saguinus</taxon>
    </lineage>
</organism>
<accession>P55079</accession>
<gene>
    <name type="primary">B2M</name>
</gene>